<feature type="chain" id="PRO_0000232211" description="ATP-dependent RNA helicase has1">
    <location>
        <begin position="1"/>
        <end position="609"/>
    </location>
</feature>
<feature type="domain" description="Helicase ATP-binding" evidence="2">
    <location>
        <begin position="159"/>
        <end position="335"/>
    </location>
</feature>
<feature type="domain" description="Helicase C-terminal" evidence="3">
    <location>
        <begin position="349"/>
        <end position="519"/>
    </location>
</feature>
<feature type="region of interest" description="Disordered" evidence="4">
    <location>
        <begin position="1"/>
        <end position="131"/>
    </location>
</feature>
<feature type="region of interest" description="Disordered" evidence="4">
    <location>
        <begin position="576"/>
        <end position="609"/>
    </location>
</feature>
<feature type="short sequence motif" description="Q motif">
    <location>
        <begin position="128"/>
        <end position="156"/>
    </location>
</feature>
<feature type="short sequence motif" description="DEAD box">
    <location>
        <begin position="282"/>
        <end position="285"/>
    </location>
</feature>
<feature type="short sequence motif" description="Bipartite nuclear localization signal" evidence="1">
    <location>
        <begin position="361"/>
        <end position="377"/>
    </location>
</feature>
<feature type="compositionally biased region" description="Basic residues" evidence="4">
    <location>
        <begin position="11"/>
        <end position="21"/>
    </location>
</feature>
<feature type="compositionally biased region" description="Basic and acidic residues" evidence="4">
    <location>
        <begin position="51"/>
        <end position="69"/>
    </location>
</feature>
<feature type="compositionally biased region" description="Acidic residues" evidence="4">
    <location>
        <begin position="80"/>
        <end position="97"/>
    </location>
</feature>
<feature type="compositionally biased region" description="Low complexity" evidence="4">
    <location>
        <begin position="586"/>
        <end position="596"/>
    </location>
</feature>
<feature type="compositionally biased region" description="Basic residues" evidence="4">
    <location>
        <begin position="600"/>
        <end position="609"/>
    </location>
</feature>
<feature type="binding site" evidence="2">
    <location>
        <begin position="172"/>
        <end position="179"/>
    </location>
    <ligand>
        <name>ATP</name>
        <dbReference type="ChEBI" id="CHEBI:30616"/>
    </ligand>
</feature>
<comment type="function">
    <text>ATP-dependent RNA helicase involved in 40S ribosomal subunit biogenesis. Required for the processing and cleavage of 35S pre-rRNA at sites A0, A1, and A2, leading to mature 18S rRNA.</text>
</comment>
<comment type="catalytic activity">
    <reaction>
        <text>ATP + H2O = ADP + phosphate + H(+)</text>
        <dbReference type="Rhea" id="RHEA:13065"/>
        <dbReference type="ChEBI" id="CHEBI:15377"/>
        <dbReference type="ChEBI" id="CHEBI:15378"/>
        <dbReference type="ChEBI" id="CHEBI:30616"/>
        <dbReference type="ChEBI" id="CHEBI:43474"/>
        <dbReference type="ChEBI" id="CHEBI:456216"/>
        <dbReference type="EC" id="3.6.4.13"/>
    </reaction>
</comment>
<comment type="subunit">
    <text evidence="1">Associates in the nucleolus with the 60S and pre-60S ribosomal subunits.</text>
</comment>
<comment type="subcellular location">
    <subcellularLocation>
        <location evidence="1">Nucleus</location>
        <location evidence="1">Nucleolus</location>
    </subcellularLocation>
</comment>
<comment type="domain">
    <text>The Q motif is unique to and characteristic of the DEAD box family of RNA helicases and controls ATP binding and hydrolysis.</text>
</comment>
<comment type="similarity">
    <text evidence="5">Belongs to the DEAD box helicase family. DDX18/HAS1 subfamily.</text>
</comment>
<sequence>MPAAVDTAKTISKKRKRKHGGSAREATDNGVATSPAENGVEGKATETTTELTKDKDVELAKKVVKEEAQKKRKVSHSPSDEEESESEDEEKKEEDEKDNVKEDSGKANVPDLPSVDAVSLPQPDGGPKKFTELGLSEKTLQGIKEMGFETMTEIQQRTIPPLLAGRDVLGAAKTGSGKTLAFLIPAIEMLSALRFKPRNGTGVIVVSPTRELALQIFGVARELLTAHSQTYGIVIGGANRRAEAEKLTKGVNLLIATPGRLLDHLQNTPGFVFKNLKTLVIDEADRILEVGFEDEMRQIIKILPNEDRQTMLFSATQTTKVEDLARISLRPGPLYINVDHRKEHSTVEGLEQGYVICEADKRFLLLFSFLKRNLKKKIIVFFSSCNCVKYHAELLNYIDLPVLDLHGKQKQQKRTNTFFEFCNAKQGVLICTDVAARGLDIPAVDWIIQFDPPDDTRDYIHRVGRTARGANGRGRSLMFLQPSEVGFLKYLKEARVPVVEFDFPAKKIVNVQSQLEKLISQNYYLNKSAKDGYRSYLQAYASHSLRSVFDVHKLDLVKVAKSFGFSTPPRIDIQLGSSLSRDKKQQQQGRRSYGSQPKGLKFKRKHEDD</sequence>
<reference key="1">
    <citation type="journal article" date="2005" name="Nature">
        <title>Sequencing of Aspergillus nidulans and comparative analysis with A. fumigatus and A. oryzae.</title>
        <authorList>
            <person name="Galagan J.E."/>
            <person name="Calvo S.E."/>
            <person name="Cuomo C."/>
            <person name="Ma L.-J."/>
            <person name="Wortman J.R."/>
            <person name="Batzoglou S."/>
            <person name="Lee S.-I."/>
            <person name="Bastuerkmen M."/>
            <person name="Spevak C.C."/>
            <person name="Clutterbuck J."/>
            <person name="Kapitonov V."/>
            <person name="Jurka J."/>
            <person name="Scazzocchio C."/>
            <person name="Farman M.L."/>
            <person name="Butler J."/>
            <person name="Purcell S."/>
            <person name="Harris S."/>
            <person name="Braus G.H."/>
            <person name="Draht O."/>
            <person name="Busch S."/>
            <person name="D'Enfert C."/>
            <person name="Bouchier C."/>
            <person name="Goldman G.H."/>
            <person name="Bell-Pedersen D."/>
            <person name="Griffiths-Jones S."/>
            <person name="Doonan J.H."/>
            <person name="Yu J."/>
            <person name="Vienken K."/>
            <person name="Pain A."/>
            <person name="Freitag M."/>
            <person name="Selker E.U."/>
            <person name="Archer D.B."/>
            <person name="Penalva M.A."/>
            <person name="Oakley B.R."/>
            <person name="Momany M."/>
            <person name="Tanaka T."/>
            <person name="Kumagai T."/>
            <person name="Asai K."/>
            <person name="Machida M."/>
            <person name="Nierman W.C."/>
            <person name="Denning D.W."/>
            <person name="Caddick M.X."/>
            <person name="Hynes M."/>
            <person name="Paoletti M."/>
            <person name="Fischer R."/>
            <person name="Miller B.L."/>
            <person name="Dyer P.S."/>
            <person name="Sachs M.S."/>
            <person name="Osmani S.A."/>
            <person name="Birren B.W."/>
        </authorList>
    </citation>
    <scope>NUCLEOTIDE SEQUENCE [LARGE SCALE GENOMIC DNA]</scope>
    <source>
        <strain>FGSC A4 / ATCC 38163 / CBS 112.46 / NRRL 194 / M139</strain>
    </source>
</reference>
<reference key="2">
    <citation type="journal article" date="2009" name="Fungal Genet. Biol.">
        <title>The 2008 update of the Aspergillus nidulans genome annotation: a community effort.</title>
        <authorList>
            <person name="Wortman J.R."/>
            <person name="Gilsenan J.M."/>
            <person name="Joardar V."/>
            <person name="Deegan J."/>
            <person name="Clutterbuck J."/>
            <person name="Andersen M.R."/>
            <person name="Archer D."/>
            <person name="Bencina M."/>
            <person name="Braus G."/>
            <person name="Coutinho P."/>
            <person name="von Dohren H."/>
            <person name="Doonan J."/>
            <person name="Driessen A.J."/>
            <person name="Durek P."/>
            <person name="Espeso E."/>
            <person name="Fekete E."/>
            <person name="Flipphi M."/>
            <person name="Estrada C.G."/>
            <person name="Geysens S."/>
            <person name="Goldman G."/>
            <person name="de Groot P.W."/>
            <person name="Hansen K."/>
            <person name="Harris S.D."/>
            <person name="Heinekamp T."/>
            <person name="Helmstaedt K."/>
            <person name="Henrissat B."/>
            <person name="Hofmann G."/>
            <person name="Homan T."/>
            <person name="Horio T."/>
            <person name="Horiuchi H."/>
            <person name="James S."/>
            <person name="Jones M."/>
            <person name="Karaffa L."/>
            <person name="Karanyi Z."/>
            <person name="Kato M."/>
            <person name="Keller N."/>
            <person name="Kelly D.E."/>
            <person name="Kiel J.A."/>
            <person name="Kim J.M."/>
            <person name="van der Klei I.J."/>
            <person name="Klis F.M."/>
            <person name="Kovalchuk A."/>
            <person name="Krasevec N."/>
            <person name="Kubicek C.P."/>
            <person name="Liu B."/>
            <person name="Maccabe A."/>
            <person name="Meyer V."/>
            <person name="Mirabito P."/>
            <person name="Miskei M."/>
            <person name="Mos M."/>
            <person name="Mullins J."/>
            <person name="Nelson D.R."/>
            <person name="Nielsen J."/>
            <person name="Oakley B.R."/>
            <person name="Osmani S.A."/>
            <person name="Pakula T."/>
            <person name="Paszewski A."/>
            <person name="Paulsen I."/>
            <person name="Pilsyk S."/>
            <person name="Pocsi I."/>
            <person name="Punt P.J."/>
            <person name="Ram A.F."/>
            <person name="Ren Q."/>
            <person name="Robellet X."/>
            <person name="Robson G."/>
            <person name="Seiboth B."/>
            <person name="van Solingen P."/>
            <person name="Specht T."/>
            <person name="Sun J."/>
            <person name="Taheri-Talesh N."/>
            <person name="Takeshita N."/>
            <person name="Ussery D."/>
            <person name="vanKuyk P.A."/>
            <person name="Visser H."/>
            <person name="van de Vondervoort P.J."/>
            <person name="de Vries R.P."/>
            <person name="Walton J."/>
            <person name="Xiang X."/>
            <person name="Xiong Y."/>
            <person name="Zeng A.P."/>
            <person name="Brandt B.W."/>
            <person name="Cornell M.J."/>
            <person name="van den Hondel C.A."/>
            <person name="Visser J."/>
            <person name="Oliver S.G."/>
            <person name="Turner G."/>
        </authorList>
    </citation>
    <scope>GENOME REANNOTATION</scope>
    <source>
        <strain>FGSC A4 / ATCC 38163 / CBS 112.46 / NRRL 194 / M139</strain>
    </source>
</reference>
<dbReference type="EC" id="3.6.4.13"/>
<dbReference type="EMBL" id="AACD01000029">
    <property type="protein sequence ID" value="EAA65114.1"/>
    <property type="molecule type" value="Genomic_DNA"/>
</dbReference>
<dbReference type="EMBL" id="BN001307">
    <property type="protein sequence ID" value="CBF85879.1"/>
    <property type="molecule type" value="Genomic_DNA"/>
</dbReference>
<dbReference type="RefSeq" id="XP_659553.1">
    <property type="nucleotide sequence ID" value="XM_654461.1"/>
</dbReference>
<dbReference type="SMR" id="Q5BBY1"/>
<dbReference type="FunCoup" id="Q5BBY1">
    <property type="interactions" value="1142"/>
</dbReference>
<dbReference type="STRING" id="227321.Q5BBY1"/>
<dbReference type="EnsemblFungi" id="CBF85879">
    <property type="protein sequence ID" value="CBF85879"/>
    <property type="gene ID" value="ANIA_01949"/>
</dbReference>
<dbReference type="KEGG" id="ani:ANIA_01949"/>
<dbReference type="VEuPathDB" id="FungiDB:AN1949"/>
<dbReference type="eggNOG" id="KOG0342">
    <property type="taxonomic scope" value="Eukaryota"/>
</dbReference>
<dbReference type="HOGENOM" id="CLU_003041_26_5_1"/>
<dbReference type="InParanoid" id="Q5BBY1"/>
<dbReference type="OMA" id="LMEFHSQ"/>
<dbReference type="OrthoDB" id="10259640at2759"/>
<dbReference type="Proteomes" id="UP000000560">
    <property type="component" value="Chromosome VII"/>
</dbReference>
<dbReference type="GO" id="GO:0005635">
    <property type="term" value="C:nuclear envelope"/>
    <property type="evidence" value="ECO:0007669"/>
    <property type="project" value="EnsemblFungi"/>
</dbReference>
<dbReference type="GO" id="GO:0005730">
    <property type="term" value="C:nucleolus"/>
    <property type="evidence" value="ECO:0000318"/>
    <property type="project" value="GO_Central"/>
</dbReference>
<dbReference type="GO" id="GO:0030687">
    <property type="term" value="C:preribosome, large subunit precursor"/>
    <property type="evidence" value="ECO:0007669"/>
    <property type="project" value="EnsemblFungi"/>
</dbReference>
<dbReference type="GO" id="GO:0032040">
    <property type="term" value="C:small-subunit processome"/>
    <property type="evidence" value="ECO:0007669"/>
    <property type="project" value="EnsemblFungi"/>
</dbReference>
<dbReference type="GO" id="GO:0005524">
    <property type="term" value="F:ATP binding"/>
    <property type="evidence" value="ECO:0007669"/>
    <property type="project" value="UniProtKB-KW"/>
</dbReference>
<dbReference type="GO" id="GO:0016887">
    <property type="term" value="F:ATP hydrolysis activity"/>
    <property type="evidence" value="ECO:0007669"/>
    <property type="project" value="RHEA"/>
</dbReference>
<dbReference type="GO" id="GO:0042802">
    <property type="term" value="F:identical protein binding"/>
    <property type="evidence" value="ECO:0007669"/>
    <property type="project" value="EnsemblFungi"/>
</dbReference>
<dbReference type="GO" id="GO:0003723">
    <property type="term" value="F:RNA binding"/>
    <property type="evidence" value="ECO:0007669"/>
    <property type="project" value="UniProtKB-KW"/>
</dbReference>
<dbReference type="GO" id="GO:0003724">
    <property type="term" value="F:RNA helicase activity"/>
    <property type="evidence" value="ECO:0007669"/>
    <property type="project" value="UniProtKB-EC"/>
</dbReference>
<dbReference type="GO" id="GO:0000463">
    <property type="term" value="P:maturation of LSU-rRNA from tricistronic rRNA transcript (SSU-rRNA, 5.8S rRNA, LSU-rRNA)"/>
    <property type="evidence" value="ECO:0000318"/>
    <property type="project" value="GO_Central"/>
</dbReference>
<dbReference type="GO" id="GO:0000462">
    <property type="term" value="P:maturation of SSU-rRNA from tricistronic rRNA transcript (SSU-rRNA, 5.8S rRNA, LSU-rRNA)"/>
    <property type="evidence" value="ECO:0007669"/>
    <property type="project" value="EnsemblFungi"/>
</dbReference>
<dbReference type="GO" id="GO:1990417">
    <property type="term" value="P:snoRNA release from pre-rRNA"/>
    <property type="evidence" value="ECO:0007669"/>
    <property type="project" value="EnsemblFungi"/>
</dbReference>
<dbReference type="CDD" id="cd17942">
    <property type="entry name" value="DEADc_DDX18"/>
    <property type="match status" value="1"/>
</dbReference>
<dbReference type="CDD" id="cd18787">
    <property type="entry name" value="SF2_C_DEAD"/>
    <property type="match status" value="1"/>
</dbReference>
<dbReference type="FunFam" id="3.40.50.300:FF:000379">
    <property type="entry name" value="RNA helicase"/>
    <property type="match status" value="1"/>
</dbReference>
<dbReference type="FunFam" id="3.40.50.300:FF:000460">
    <property type="entry name" value="RNA helicase"/>
    <property type="match status" value="1"/>
</dbReference>
<dbReference type="Gene3D" id="3.40.50.300">
    <property type="entry name" value="P-loop containing nucleotide triphosphate hydrolases"/>
    <property type="match status" value="2"/>
</dbReference>
<dbReference type="InterPro" id="IPR044773">
    <property type="entry name" value="DDX18/Has1_DEADc"/>
</dbReference>
<dbReference type="InterPro" id="IPR011545">
    <property type="entry name" value="DEAD/DEAH_box_helicase_dom"/>
</dbReference>
<dbReference type="InterPro" id="IPR014001">
    <property type="entry name" value="Helicase_ATP-bd"/>
</dbReference>
<dbReference type="InterPro" id="IPR001650">
    <property type="entry name" value="Helicase_C-like"/>
</dbReference>
<dbReference type="InterPro" id="IPR027417">
    <property type="entry name" value="P-loop_NTPase"/>
</dbReference>
<dbReference type="InterPro" id="IPR000629">
    <property type="entry name" value="RNA-helicase_DEAD-box_CS"/>
</dbReference>
<dbReference type="InterPro" id="IPR014014">
    <property type="entry name" value="RNA_helicase_DEAD_Q_motif"/>
</dbReference>
<dbReference type="InterPro" id="IPR025313">
    <property type="entry name" value="SPB4-like_CTE"/>
</dbReference>
<dbReference type="PANTHER" id="PTHR24031">
    <property type="entry name" value="RNA HELICASE"/>
    <property type="match status" value="1"/>
</dbReference>
<dbReference type="Pfam" id="PF13959">
    <property type="entry name" value="CTE_SPB4"/>
    <property type="match status" value="1"/>
</dbReference>
<dbReference type="Pfam" id="PF00270">
    <property type="entry name" value="DEAD"/>
    <property type="match status" value="1"/>
</dbReference>
<dbReference type="Pfam" id="PF00271">
    <property type="entry name" value="Helicase_C"/>
    <property type="match status" value="1"/>
</dbReference>
<dbReference type="SMART" id="SM00487">
    <property type="entry name" value="DEXDc"/>
    <property type="match status" value="1"/>
</dbReference>
<dbReference type="SMART" id="SM01178">
    <property type="entry name" value="DUF4217"/>
    <property type="match status" value="1"/>
</dbReference>
<dbReference type="SMART" id="SM00490">
    <property type="entry name" value="HELICc"/>
    <property type="match status" value="1"/>
</dbReference>
<dbReference type="SUPFAM" id="SSF52540">
    <property type="entry name" value="P-loop containing nucleoside triphosphate hydrolases"/>
    <property type="match status" value="2"/>
</dbReference>
<dbReference type="PROSITE" id="PS00039">
    <property type="entry name" value="DEAD_ATP_HELICASE"/>
    <property type="match status" value="1"/>
</dbReference>
<dbReference type="PROSITE" id="PS51192">
    <property type="entry name" value="HELICASE_ATP_BIND_1"/>
    <property type="match status" value="1"/>
</dbReference>
<dbReference type="PROSITE" id="PS51194">
    <property type="entry name" value="HELICASE_CTER"/>
    <property type="match status" value="1"/>
</dbReference>
<dbReference type="PROSITE" id="PS51195">
    <property type="entry name" value="Q_MOTIF"/>
    <property type="match status" value="1"/>
</dbReference>
<protein>
    <recommendedName>
        <fullName>ATP-dependent RNA helicase has1</fullName>
        <ecNumber>3.6.4.13</ecNumber>
    </recommendedName>
</protein>
<organism>
    <name type="scientific">Emericella nidulans (strain FGSC A4 / ATCC 38163 / CBS 112.46 / NRRL 194 / M139)</name>
    <name type="common">Aspergillus nidulans</name>
    <dbReference type="NCBI Taxonomy" id="227321"/>
    <lineage>
        <taxon>Eukaryota</taxon>
        <taxon>Fungi</taxon>
        <taxon>Dikarya</taxon>
        <taxon>Ascomycota</taxon>
        <taxon>Pezizomycotina</taxon>
        <taxon>Eurotiomycetes</taxon>
        <taxon>Eurotiomycetidae</taxon>
        <taxon>Eurotiales</taxon>
        <taxon>Aspergillaceae</taxon>
        <taxon>Aspergillus</taxon>
        <taxon>Aspergillus subgen. Nidulantes</taxon>
    </lineage>
</organism>
<accession>Q5BBY1</accession>
<accession>C8VKX1</accession>
<name>HAS1_EMENI</name>
<evidence type="ECO:0000250" key="1"/>
<evidence type="ECO:0000255" key="2">
    <source>
        <dbReference type="PROSITE-ProRule" id="PRU00541"/>
    </source>
</evidence>
<evidence type="ECO:0000255" key="3">
    <source>
        <dbReference type="PROSITE-ProRule" id="PRU00542"/>
    </source>
</evidence>
<evidence type="ECO:0000256" key="4">
    <source>
        <dbReference type="SAM" id="MobiDB-lite"/>
    </source>
</evidence>
<evidence type="ECO:0000305" key="5"/>
<gene>
    <name type="primary">has1</name>
    <name type="ORF">AN1949</name>
</gene>
<keyword id="KW-0067">ATP-binding</keyword>
<keyword id="KW-0347">Helicase</keyword>
<keyword id="KW-0378">Hydrolase</keyword>
<keyword id="KW-0547">Nucleotide-binding</keyword>
<keyword id="KW-0539">Nucleus</keyword>
<keyword id="KW-1185">Reference proteome</keyword>
<keyword id="KW-0690">Ribosome biogenesis</keyword>
<keyword id="KW-0694">RNA-binding</keyword>
<keyword id="KW-0698">rRNA processing</keyword>
<proteinExistence type="inferred from homology"/>